<proteinExistence type="evidence at protein level"/>
<name>SPCS_METJA</name>
<protein>
    <recommendedName>
        <fullName>O-phosphoseryl-tRNA(Sec) selenium transferase</fullName>
        <ecNumber evidence="2">2.9.1.2</ecNumber>
    </recommendedName>
    <alternativeName>
        <fullName>Selenocysteine synthase</fullName>
        <shortName>Sec synthase</shortName>
    </alternativeName>
    <alternativeName>
        <fullName>Selenocysteinyl-tRNA(Sec) synthase</fullName>
    </alternativeName>
    <alternativeName>
        <fullName>Sep-tRNA:Sec-tRNA synthase</fullName>
        <shortName>SepSecS</shortName>
    </alternativeName>
</protein>
<feature type="chain" id="PRO_0000219881" description="O-phosphoseryl-tRNA(Sec) selenium transferase">
    <location>
        <begin position="1"/>
        <end position="434"/>
    </location>
</feature>
<feature type="region of interest" description="Tetramerization" evidence="3">
    <location>
        <begin position="1"/>
        <end position="40"/>
    </location>
</feature>
<feature type="region of interest" description="Phosphate loop (P-loop)" evidence="3">
    <location>
        <begin position="92"/>
        <end position="102"/>
    </location>
</feature>
<feature type="binding site" evidence="2">
    <location>
        <position position="71"/>
    </location>
    <ligand>
        <name>pyridoxal 5'-phosphate</name>
        <dbReference type="ChEBI" id="CHEBI:597326"/>
    </ligand>
</feature>
<feature type="binding site" evidence="2">
    <location>
        <position position="93"/>
    </location>
    <ligand>
        <name>substrate</name>
    </ligand>
</feature>
<feature type="binding site" evidence="2">
    <location>
        <position position="94"/>
    </location>
    <ligand>
        <name>substrate</name>
    </ligand>
</feature>
<feature type="binding site" evidence="2">
    <location>
        <position position="101"/>
    </location>
    <ligand>
        <name>substrate</name>
    </ligand>
</feature>
<feature type="binding site" evidence="2">
    <location>
        <position position="306"/>
    </location>
    <ligand>
        <name>substrate</name>
    </ligand>
</feature>
<feature type="site" description="May act as a substrate filter by repelling compounds with a negatively charged alpha-carboxylate" evidence="1">
    <location>
        <position position="70"/>
    </location>
</feature>
<feature type="modified residue" description="N6-(pyridoxal phosphate)lysine" evidence="2 4">
    <location>
        <position position="277"/>
    </location>
</feature>
<feature type="mutagenesis site" description="Loss of activity." evidence="4">
    <original>K</original>
    <variation>A</variation>
    <location>
        <position position="277"/>
    </location>
</feature>
<gene>
    <name type="primary">spcS</name>
    <name type="ordered locus">MJ0610</name>
</gene>
<evidence type="ECO:0000250" key="1"/>
<evidence type="ECO:0000250" key="2">
    <source>
        <dbReference type="UniProtKB" id="Q6LZM9"/>
    </source>
</evidence>
<evidence type="ECO:0000250" key="3">
    <source>
        <dbReference type="UniProtKB" id="Q6P6M7"/>
    </source>
</evidence>
<evidence type="ECO:0000269" key="4">
    <source>
    </source>
</evidence>
<evidence type="ECO:0000305" key="5"/>
<comment type="function">
    <text evidence="4">Converts O-phosphoseryl-tRNA(Sec) to selenocysteinyl-tRNA(Sec) required for selenoprotein biosynthesis.</text>
</comment>
<comment type="catalytic activity">
    <reaction evidence="2">
        <text>O-phospho-L-seryl-tRNA(Sec) + selenophosphate + H2O = L-selenocysteinyl-tRNA(Sec) + 2 phosphate</text>
        <dbReference type="Rhea" id="RHEA:25041"/>
        <dbReference type="Rhea" id="RHEA-COMP:9743"/>
        <dbReference type="Rhea" id="RHEA-COMP:9947"/>
        <dbReference type="ChEBI" id="CHEBI:15377"/>
        <dbReference type="ChEBI" id="CHEBI:16144"/>
        <dbReference type="ChEBI" id="CHEBI:43474"/>
        <dbReference type="ChEBI" id="CHEBI:78551"/>
        <dbReference type="ChEBI" id="CHEBI:78573"/>
        <dbReference type="EC" id="2.9.1.2"/>
    </reaction>
</comment>
<comment type="cofactor">
    <cofactor evidence="2">
        <name>pyridoxal 5'-phosphate</name>
        <dbReference type="ChEBI" id="CHEBI:597326"/>
    </cofactor>
</comment>
<comment type="pathway">
    <text evidence="2">Aminoacyl-tRNA biosynthesis; selenocysteinyl-tRNA(Sec) biosynthesis; selenocysteinyl-tRNA(Sec) from L-seryl-tRNA(Sec) (archaeal/eukaryal route): step 2/2.</text>
</comment>
<comment type="subunit">
    <text evidence="2">Homotetramer.</text>
</comment>
<comment type="similarity">
    <text evidence="5">Belongs to the SepSecS family.</text>
</comment>
<sequence>MGLNITGLIPKHMENRGKLTLKENLKIIENILEQRKAPENGIDEEHIKLLLRLLSFMDTDKDPNVVQIGEREARVYTKLQRDGVFDFCHGVGRSGNLIDPQPKAPGASVMYKLTNKLLESFLKALGLKVNAIATPVATGMSLALCLSAARKKYNSNVVIYPYAAHKSPIKATSFIGMRMRLVETVLDGDIVKVEVSDIEDAIRKEINENNNPVVLSTLTFFPPRKSDDIKEIAKICQDYDIPHIINGAYAIQNFYYIEKLKKALKYRIDAVVSSSDKNLFTPIGGGIIYTKDESFLKEISLTYPGRASANPIVNILISLLAIGTKDYLNLMKEQKECKKLLNELLEDLAKKKGEKVLNVENPISSCITTKKDPLDVAGKLYNLRVTGPRGVRRNDKFGTCYLKEYPYDYIVVNSAIGVKKEDIYKVIEKLDEVL</sequence>
<organism>
    <name type="scientific">Methanocaldococcus jannaschii (strain ATCC 43067 / DSM 2661 / JAL-1 / JCM 10045 / NBRC 100440)</name>
    <name type="common">Methanococcus jannaschii</name>
    <dbReference type="NCBI Taxonomy" id="243232"/>
    <lineage>
        <taxon>Archaea</taxon>
        <taxon>Methanobacteriati</taxon>
        <taxon>Methanobacteriota</taxon>
        <taxon>Methanomada group</taxon>
        <taxon>Methanococci</taxon>
        <taxon>Methanococcales</taxon>
        <taxon>Methanocaldococcaceae</taxon>
        <taxon>Methanocaldococcus</taxon>
    </lineage>
</organism>
<dbReference type="EC" id="2.9.1.2" evidence="2"/>
<dbReference type="EMBL" id="L77117">
    <property type="protein sequence ID" value="AAB98603.1"/>
    <property type="molecule type" value="Genomic_DNA"/>
</dbReference>
<dbReference type="PIR" id="B64376">
    <property type="entry name" value="B64376"/>
</dbReference>
<dbReference type="RefSeq" id="WP_010870114.1">
    <property type="nucleotide sequence ID" value="NC_000909.1"/>
</dbReference>
<dbReference type="SMR" id="Q58027"/>
<dbReference type="FunCoup" id="Q58027">
    <property type="interactions" value="98"/>
</dbReference>
<dbReference type="STRING" id="243232.MJ_0610"/>
<dbReference type="PaxDb" id="243232-MJ_0610"/>
<dbReference type="EnsemblBacteria" id="AAB98603">
    <property type="protein sequence ID" value="AAB98603"/>
    <property type="gene ID" value="MJ_0610"/>
</dbReference>
<dbReference type="GeneID" id="1451475"/>
<dbReference type="KEGG" id="mja:MJ_0610"/>
<dbReference type="eggNOG" id="arCOG00119">
    <property type="taxonomic scope" value="Archaea"/>
</dbReference>
<dbReference type="HOGENOM" id="CLU_022508_0_0_2"/>
<dbReference type="InParanoid" id="Q58027"/>
<dbReference type="OrthoDB" id="64344at2157"/>
<dbReference type="BRENDA" id="2.9.1.2">
    <property type="organism ID" value="3260"/>
</dbReference>
<dbReference type="UniPathway" id="UPA00906">
    <property type="reaction ID" value="UER00898"/>
</dbReference>
<dbReference type="Proteomes" id="UP000000805">
    <property type="component" value="Chromosome"/>
</dbReference>
<dbReference type="GO" id="GO:0098621">
    <property type="term" value="F:O-phosphoseryl-tRNA(Sec) selenium transferase activity"/>
    <property type="evidence" value="ECO:0007669"/>
    <property type="project" value="UniProtKB-EC"/>
</dbReference>
<dbReference type="GO" id="GO:0000049">
    <property type="term" value="F:tRNA binding"/>
    <property type="evidence" value="ECO:0000318"/>
    <property type="project" value="GO_Central"/>
</dbReference>
<dbReference type="GO" id="GO:0001717">
    <property type="term" value="P:conversion of seryl-tRNAsec to selenocys-tRNAsec"/>
    <property type="evidence" value="ECO:0007669"/>
    <property type="project" value="InterPro"/>
</dbReference>
<dbReference type="GO" id="GO:0001514">
    <property type="term" value="P:selenocysteine incorporation"/>
    <property type="evidence" value="ECO:0000318"/>
    <property type="project" value="GO_Central"/>
</dbReference>
<dbReference type="Gene3D" id="3.40.640.10">
    <property type="entry name" value="Type I PLP-dependent aspartate aminotransferase-like (Major domain)"/>
    <property type="match status" value="1"/>
</dbReference>
<dbReference type="InterPro" id="IPR015424">
    <property type="entry name" value="PyrdxlP-dep_Trfase"/>
</dbReference>
<dbReference type="InterPro" id="IPR015421">
    <property type="entry name" value="PyrdxlP-dep_Trfase_major"/>
</dbReference>
<dbReference type="InterPro" id="IPR019872">
    <property type="entry name" value="Sec-tRNA_Se_transferase"/>
</dbReference>
<dbReference type="InterPro" id="IPR008829">
    <property type="entry name" value="SepSecS/SepCysS"/>
</dbReference>
<dbReference type="NCBIfam" id="TIGR03531">
    <property type="entry name" value="selenium_SpcS"/>
    <property type="match status" value="1"/>
</dbReference>
<dbReference type="PANTHER" id="PTHR12944:SF2">
    <property type="entry name" value="O-PHOSPHOSERYL-TRNA(SEC) SELENIUM TRANSFERASE"/>
    <property type="match status" value="1"/>
</dbReference>
<dbReference type="PANTHER" id="PTHR12944">
    <property type="entry name" value="SOLUBLE LIVER ANTIGEN/LIVER PANCREAS ANTIGEN"/>
    <property type="match status" value="1"/>
</dbReference>
<dbReference type="Pfam" id="PF05889">
    <property type="entry name" value="SepSecS"/>
    <property type="match status" value="1"/>
</dbReference>
<dbReference type="PIRSF" id="PIRSF017689">
    <property type="entry name" value="SepSecS"/>
    <property type="match status" value="1"/>
</dbReference>
<dbReference type="SUPFAM" id="SSF53383">
    <property type="entry name" value="PLP-dependent transferases"/>
    <property type="match status" value="1"/>
</dbReference>
<accession>Q58027</accession>
<reference key="1">
    <citation type="journal article" date="1996" name="Science">
        <title>Complete genome sequence of the methanogenic archaeon, Methanococcus jannaschii.</title>
        <authorList>
            <person name="Bult C.J."/>
            <person name="White O."/>
            <person name="Olsen G.J."/>
            <person name="Zhou L."/>
            <person name="Fleischmann R.D."/>
            <person name="Sutton G.G."/>
            <person name="Blake J.A."/>
            <person name="FitzGerald L.M."/>
            <person name="Clayton R.A."/>
            <person name="Gocayne J.D."/>
            <person name="Kerlavage A.R."/>
            <person name="Dougherty B.A."/>
            <person name="Tomb J.-F."/>
            <person name="Adams M.D."/>
            <person name="Reich C.I."/>
            <person name="Overbeek R."/>
            <person name="Kirkness E.F."/>
            <person name="Weinstock K.G."/>
            <person name="Merrick J.M."/>
            <person name="Glodek A."/>
            <person name="Scott J.L."/>
            <person name="Geoghagen N.S.M."/>
            <person name="Weidman J.F."/>
            <person name="Fuhrmann J.L."/>
            <person name="Nguyen D."/>
            <person name="Utterback T.R."/>
            <person name="Kelley J.M."/>
            <person name="Peterson J.D."/>
            <person name="Sadow P.W."/>
            <person name="Hanna M.C."/>
            <person name="Cotton M.D."/>
            <person name="Roberts K.M."/>
            <person name="Hurst M.A."/>
            <person name="Kaine B.P."/>
            <person name="Borodovsky M."/>
            <person name="Klenk H.-P."/>
            <person name="Fraser C.M."/>
            <person name="Smith H.O."/>
            <person name="Woese C.R."/>
            <person name="Venter J.C."/>
        </authorList>
    </citation>
    <scope>NUCLEOTIDE SEQUENCE [LARGE SCALE GENOMIC DNA]</scope>
    <source>
        <strain>ATCC 43067 / DSM 2661 / JAL-1 / JCM 10045 / NBRC 100440</strain>
    </source>
</reference>
<reference key="2">
    <citation type="journal article" date="2006" name="Proc. Natl. Acad. Sci. U.S.A.">
        <title>RNA-dependent conversion of phosphoserine forms selenocysteine in eukaryotes and archaea.</title>
        <authorList>
            <person name="Yuan J."/>
            <person name="Palioura S."/>
            <person name="Salazar J.C."/>
            <person name="Su D."/>
            <person name="O'Donoghue P."/>
            <person name="Hohn M.J."/>
            <person name="Cardoso A.M."/>
            <person name="Whitman W.B."/>
            <person name="Soell D."/>
        </authorList>
    </citation>
    <scope>FUNCTION</scope>
    <scope>PYRIDOXAL PHOSPHATE AT LYS-277</scope>
    <scope>MUTAGENESIS OF LYS-277</scope>
</reference>
<keyword id="KW-0648">Protein biosynthesis</keyword>
<keyword id="KW-0663">Pyridoxal phosphate</keyword>
<keyword id="KW-1185">Reference proteome</keyword>
<keyword id="KW-0694">RNA-binding</keyword>
<keyword id="KW-0711">Selenium</keyword>
<keyword id="KW-0808">Transferase</keyword>
<keyword id="KW-0820">tRNA-binding</keyword>